<sequence length="501" mass="57193">MLPPKIFFEKFKEIIWPIERKELKLFIPMALMMLCILFNFGALRSIKDSLVVPSMGAEIISFLKLWLVLPSCVIFTVLYVKLSNKLNFEYIFYSIVGTFLLFFLLFAYIIYPNQDIYHPNDAMINNLIASYPNLKWFIKIGSKWSYALMYIFSELWSAVVINLMFWQFANHIFDTAKAKRFYPVLGMIGNIGLIIAGSVLVFFSSGQYIIDSELLTDSFNSSSCNSIILQPIISIIVTAGIIAMFLFRIINRFILTNAINVLDVKKAAARTKTKLALIESIKLIIHSKYIGRIALLIICYGLLINIVEGPWKAKIKELHPNTIDYVNFMGMFNIWMGISCVTFMIIGSNILRRLGWLISALLTPIMLSITGFIFFIFIIFIEEIGTCFGDFNLLYVAIIVGAIQNILSKSSKYSLFDSTKEMAYIPLSLELRTKGKAAVEVIGTKFGKSLGAFIQSLIFIIIPTATFDSIIIYLLVIFIVMMNLWIWNIIKLNKEYIKLCK</sequence>
<keyword id="KW-0067">ATP-binding</keyword>
<keyword id="KW-1003">Cell membrane</keyword>
<keyword id="KW-0472">Membrane</keyword>
<keyword id="KW-0547">Nucleotide-binding</keyword>
<keyword id="KW-0812">Transmembrane</keyword>
<keyword id="KW-1133">Transmembrane helix</keyword>
<keyword id="KW-0813">Transport</keyword>
<protein>
    <recommendedName>
        <fullName>ADP,ATP carrier protein 3</fullName>
    </recommendedName>
    <alternativeName>
        <fullName>ADP/ATP translocase 3</fullName>
    </alternativeName>
</protein>
<reference key="1">
    <citation type="journal article" date="2004" name="J. Bacteriol.">
        <title>Complete genome sequence of Rickettsia typhi and comparison with sequences of other Rickettsiae.</title>
        <authorList>
            <person name="McLeod M.P."/>
            <person name="Qin X."/>
            <person name="Karpathy S.E."/>
            <person name="Gioia J."/>
            <person name="Highlander S.K."/>
            <person name="Fox G.E."/>
            <person name="McNeill T.Z."/>
            <person name="Jiang H."/>
            <person name="Muzny D."/>
            <person name="Jacob L.S."/>
            <person name="Hawes A.C."/>
            <person name="Sodergren E."/>
            <person name="Gill R."/>
            <person name="Hume J."/>
            <person name="Morgan M."/>
            <person name="Fan G."/>
            <person name="Amin A.G."/>
            <person name="Gibbs R.A."/>
            <person name="Hong C."/>
            <person name="Yu X.-J."/>
            <person name="Walker D.H."/>
            <person name="Weinstock G.M."/>
        </authorList>
    </citation>
    <scope>NUCLEOTIDE SEQUENCE [LARGE SCALE GENOMIC DNA]</scope>
    <source>
        <strain>ATCC VR-144 / Wilmington</strain>
    </source>
</reference>
<proteinExistence type="inferred from homology"/>
<accession>Q68WQ3</accession>
<evidence type="ECO:0000250" key="1"/>
<evidence type="ECO:0000255" key="2"/>
<evidence type="ECO:0000305" key="3"/>
<name>TLCC_RICTY</name>
<dbReference type="EMBL" id="AE017197">
    <property type="protein sequence ID" value="AAU03939.1"/>
    <property type="molecule type" value="Genomic_DNA"/>
</dbReference>
<dbReference type="RefSeq" id="WP_011190922.1">
    <property type="nucleotide sequence ID" value="NC_006142.1"/>
</dbReference>
<dbReference type="KEGG" id="rty:RT0464"/>
<dbReference type="eggNOG" id="COG3202">
    <property type="taxonomic scope" value="Bacteria"/>
</dbReference>
<dbReference type="HOGENOM" id="CLU_023964_0_1_5"/>
<dbReference type="OrthoDB" id="19786at2"/>
<dbReference type="Proteomes" id="UP000000604">
    <property type="component" value="Chromosome"/>
</dbReference>
<dbReference type="GO" id="GO:0005886">
    <property type="term" value="C:plasma membrane"/>
    <property type="evidence" value="ECO:0007669"/>
    <property type="project" value="UniProtKB-SubCell"/>
</dbReference>
<dbReference type="GO" id="GO:0005524">
    <property type="term" value="F:ATP binding"/>
    <property type="evidence" value="ECO:0007669"/>
    <property type="project" value="UniProtKB-KW"/>
</dbReference>
<dbReference type="GO" id="GO:0005471">
    <property type="term" value="F:ATP:ADP antiporter activity"/>
    <property type="evidence" value="ECO:0007669"/>
    <property type="project" value="InterPro"/>
</dbReference>
<dbReference type="InterPro" id="IPR004667">
    <property type="entry name" value="ADP_ATP_car_bac_type"/>
</dbReference>
<dbReference type="NCBIfam" id="TIGR00769">
    <property type="entry name" value="AAA"/>
    <property type="match status" value="1"/>
</dbReference>
<dbReference type="PANTHER" id="PTHR31187">
    <property type="match status" value="1"/>
</dbReference>
<dbReference type="PANTHER" id="PTHR31187:SF1">
    <property type="entry name" value="ADP,ATP CARRIER PROTEIN 1"/>
    <property type="match status" value="1"/>
</dbReference>
<dbReference type="Pfam" id="PF03219">
    <property type="entry name" value="TLC"/>
    <property type="match status" value="1"/>
</dbReference>
<gene>
    <name type="primary">tlcC</name>
    <name type="synonym">tlc3</name>
    <name type="ordered locus">RT0464</name>
</gene>
<comment type="function">
    <text evidence="1">Provides the rickettsial cell with host ATP in exchange for rickettsial ADP. This is an obligate exchange system. This energy acquiring activity is an important component of rickettsial parasitism (By similarity).</text>
</comment>
<comment type="subcellular location">
    <subcellularLocation>
        <location>Cell membrane</location>
        <topology>Multi-pass membrane protein</topology>
    </subcellularLocation>
</comment>
<comment type="similarity">
    <text evidence="3">Belongs to the ADP/ATP translocase tlc family.</text>
</comment>
<feature type="chain" id="PRO_0000286474" description="ADP,ATP carrier protein 3">
    <location>
        <begin position="1"/>
        <end position="501"/>
    </location>
</feature>
<feature type="transmembrane region" description="Helical" evidence="2">
    <location>
        <begin position="23"/>
        <end position="43"/>
    </location>
</feature>
<feature type="transmembrane region" description="Helical" evidence="2">
    <location>
        <begin position="59"/>
        <end position="79"/>
    </location>
</feature>
<feature type="transmembrane region" description="Helical" evidence="2">
    <location>
        <begin position="90"/>
        <end position="110"/>
    </location>
</feature>
<feature type="transmembrane region" description="Helical" evidence="2">
    <location>
        <begin position="146"/>
        <end position="166"/>
    </location>
</feature>
<feature type="transmembrane region" description="Helical" evidence="2">
    <location>
        <begin position="183"/>
        <end position="203"/>
    </location>
</feature>
<feature type="transmembrane region" description="Helical" evidence="2">
    <location>
        <begin position="227"/>
        <end position="247"/>
    </location>
</feature>
<feature type="transmembrane region" description="Helical" evidence="2">
    <location>
        <begin position="293"/>
        <end position="313"/>
    </location>
</feature>
<feature type="transmembrane region" description="Helical" evidence="2">
    <location>
        <begin position="326"/>
        <end position="346"/>
    </location>
</feature>
<feature type="transmembrane region" description="Helical" evidence="2">
    <location>
        <begin position="361"/>
        <end position="381"/>
    </location>
</feature>
<feature type="transmembrane region" description="Helical" evidence="2">
    <location>
        <begin position="383"/>
        <end position="403"/>
    </location>
</feature>
<feature type="transmembrane region" description="Helical" evidence="2">
    <location>
        <begin position="446"/>
        <end position="466"/>
    </location>
</feature>
<feature type="transmembrane region" description="Helical" evidence="2">
    <location>
        <begin position="470"/>
        <end position="490"/>
    </location>
</feature>
<organism>
    <name type="scientific">Rickettsia typhi (strain ATCC VR-144 / Wilmington)</name>
    <dbReference type="NCBI Taxonomy" id="257363"/>
    <lineage>
        <taxon>Bacteria</taxon>
        <taxon>Pseudomonadati</taxon>
        <taxon>Pseudomonadota</taxon>
        <taxon>Alphaproteobacteria</taxon>
        <taxon>Rickettsiales</taxon>
        <taxon>Rickettsiaceae</taxon>
        <taxon>Rickettsieae</taxon>
        <taxon>Rickettsia</taxon>
        <taxon>typhus group</taxon>
    </lineage>
</organism>